<gene>
    <name evidence="1" type="primary">rsmH</name>
    <name type="synonym">mraW</name>
    <name type="ordered locus">cauri_1675</name>
</gene>
<dbReference type="EC" id="2.1.1.199" evidence="1"/>
<dbReference type="EMBL" id="CP001601">
    <property type="protein sequence ID" value="ACP33268.1"/>
    <property type="molecule type" value="Genomic_DNA"/>
</dbReference>
<dbReference type="RefSeq" id="WP_010190538.1">
    <property type="nucleotide sequence ID" value="NC_012590.1"/>
</dbReference>
<dbReference type="SMR" id="C3PHG4"/>
<dbReference type="STRING" id="548476.cauri_1675"/>
<dbReference type="GeneID" id="31924304"/>
<dbReference type="KEGG" id="car:cauri_1675"/>
<dbReference type="eggNOG" id="COG0275">
    <property type="taxonomic scope" value="Bacteria"/>
</dbReference>
<dbReference type="HOGENOM" id="CLU_038422_0_0_11"/>
<dbReference type="OrthoDB" id="9806637at2"/>
<dbReference type="Proteomes" id="UP000002077">
    <property type="component" value="Chromosome"/>
</dbReference>
<dbReference type="GO" id="GO:0005737">
    <property type="term" value="C:cytoplasm"/>
    <property type="evidence" value="ECO:0007669"/>
    <property type="project" value="UniProtKB-SubCell"/>
</dbReference>
<dbReference type="GO" id="GO:0071424">
    <property type="term" value="F:rRNA (cytosine-N4-)-methyltransferase activity"/>
    <property type="evidence" value="ECO:0007669"/>
    <property type="project" value="UniProtKB-UniRule"/>
</dbReference>
<dbReference type="GO" id="GO:0070475">
    <property type="term" value="P:rRNA base methylation"/>
    <property type="evidence" value="ECO:0007669"/>
    <property type="project" value="UniProtKB-UniRule"/>
</dbReference>
<dbReference type="FunFam" id="1.10.150.170:FF:000001">
    <property type="entry name" value="Ribosomal RNA small subunit methyltransferase H"/>
    <property type="match status" value="1"/>
</dbReference>
<dbReference type="Gene3D" id="1.10.150.170">
    <property type="entry name" value="Putative methyltransferase TM0872, insert domain"/>
    <property type="match status" value="1"/>
</dbReference>
<dbReference type="Gene3D" id="3.40.50.150">
    <property type="entry name" value="Vaccinia Virus protein VP39"/>
    <property type="match status" value="1"/>
</dbReference>
<dbReference type="HAMAP" id="MF_01007">
    <property type="entry name" value="16SrRNA_methyltr_H"/>
    <property type="match status" value="1"/>
</dbReference>
<dbReference type="InterPro" id="IPR002903">
    <property type="entry name" value="RsmH"/>
</dbReference>
<dbReference type="InterPro" id="IPR023397">
    <property type="entry name" value="SAM-dep_MeTrfase_MraW_recog"/>
</dbReference>
<dbReference type="InterPro" id="IPR029063">
    <property type="entry name" value="SAM-dependent_MTases_sf"/>
</dbReference>
<dbReference type="NCBIfam" id="TIGR00006">
    <property type="entry name" value="16S rRNA (cytosine(1402)-N(4))-methyltransferase RsmH"/>
    <property type="match status" value="1"/>
</dbReference>
<dbReference type="PANTHER" id="PTHR11265:SF0">
    <property type="entry name" value="12S RRNA N4-METHYLCYTIDINE METHYLTRANSFERASE"/>
    <property type="match status" value="1"/>
</dbReference>
<dbReference type="PANTHER" id="PTHR11265">
    <property type="entry name" value="S-ADENOSYL-METHYLTRANSFERASE MRAW"/>
    <property type="match status" value="1"/>
</dbReference>
<dbReference type="Pfam" id="PF01795">
    <property type="entry name" value="Methyltransf_5"/>
    <property type="match status" value="1"/>
</dbReference>
<dbReference type="PIRSF" id="PIRSF004486">
    <property type="entry name" value="MraW"/>
    <property type="match status" value="1"/>
</dbReference>
<dbReference type="SUPFAM" id="SSF81799">
    <property type="entry name" value="Putative methyltransferase TM0872, insert domain"/>
    <property type="match status" value="1"/>
</dbReference>
<dbReference type="SUPFAM" id="SSF53335">
    <property type="entry name" value="S-adenosyl-L-methionine-dependent methyltransferases"/>
    <property type="match status" value="1"/>
</dbReference>
<accession>C3PHG4</accession>
<evidence type="ECO:0000255" key="1">
    <source>
        <dbReference type="HAMAP-Rule" id="MF_01007"/>
    </source>
</evidence>
<feature type="chain" id="PRO_0000386827" description="Ribosomal RNA small subunit methyltransferase H">
    <location>
        <begin position="1"/>
        <end position="347"/>
    </location>
</feature>
<feature type="binding site" evidence="1">
    <location>
        <begin position="50"/>
        <end position="52"/>
    </location>
    <ligand>
        <name>S-adenosyl-L-methionine</name>
        <dbReference type="ChEBI" id="CHEBI:59789"/>
    </ligand>
</feature>
<feature type="binding site" evidence="1">
    <location>
        <position position="69"/>
    </location>
    <ligand>
        <name>S-adenosyl-L-methionine</name>
        <dbReference type="ChEBI" id="CHEBI:59789"/>
    </ligand>
</feature>
<feature type="binding site" evidence="1">
    <location>
        <position position="96"/>
    </location>
    <ligand>
        <name>S-adenosyl-L-methionine</name>
        <dbReference type="ChEBI" id="CHEBI:59789"/>
    </ligand>
</feature>
<feature type="binding site" evidence="1">
    <location>
        <position position="125"/>
    </location>
    <ligand>
        <name>S-adenosyl-L-methionine</name>
        <dbReference type="ChEBI" id="CHEBI:59789"/>
    </ligand>
</feature>
<feature type="binding site" evidence="1">
    <location>
        <position position="132"/>
    </location>
    <ligand>
        <name>S-adenosyl-L-methionine</name>
        <dbReference type="ChEBI" id="CHEBI:59789"/>
    </ligand>
</feature>
<organism>
    <name type="scientific">Corynebacterium aurimucosum (strain ATCC 700975 / DSM 44827 / CIP 107346 / CN-1)</name>
    <name type="common">Corynebacterium nigricans</name>
    <dbReference type="NCBI Taxonomy" id="548476"/>
    <lineage>
        <taxon>Bacteria</taxon>
        <taxon>Bacillati</taxon>
        <taxon>Actinomycetota</taxon>
        <taxon>Actinomycetes</taxon>
        <taxon>Mycobacteriales</taxon>
        <taxon>Corynebacteriaceae</taxon>
        <taxon>Corynebacterium</taxon>
    </lineage>
</organism>
<protein>
    <recommendedName>
        <fullName evidence="1">Ribosomal RNA small subunit methyltransferase H</fullName>
        <ecNumber evidence="1">2.1.1.199</ecNumber>
    </recommendedName>
    <alternativeName>
        <fullName evidence="1">16S rRNA m(4)C1402 methyltransferase</fullName>
    </alternativeName>
    <alternativeName>
        <fullName evidence="1">rRNA (cytosine-N(4)-)-methyltransferase RsmH</fullName>
    </alternativeName>
</protein>
<keyword id="KW-0963">Cytoplasm</keyword>
<keyword id="KW-0489">Methyltransferase</keyword>
<keyword id="KW-1185">Reference proteome</keyword>
<keyword id="KW-0698">rRNA processing</keyword>
<keyword id="KW-0949">S-adenosyl-L-methionine</keyword>
<keyword id="KW-0808">Transferase</keyword>
<comment type="function">
    <text evidence="1">Specifically methylates the N4 position of cytidine in position 1402 (C1402) of 16S rRNA.</text>
</comment>
<comment type="catalytic activity">
    <reaction evidence="1">
        <text>cytidine(1402) in 16S rRNA + S-adenosyl-L-methionine = N(4)-methylcytidine(1402) in 16S rRNA + S-adenosyl-L-homocysteine + H(+)</text>
        <dbReference type="Rhea" id="RHEA:42928"/>
        <dbReference type="Rhea" id="RHEA-COMP:10286"/>
        <dbReference type="Rhea" id="RHEA-COMP:10287"/>
        <dbReference type="ChEBI" id="CHEBI:15378"/>
        <dbReference type="ChEBI" id="CHEBI:57856"/>
        <dbReference type="ChEBI" id="CHEBI:59789"/>
        <dbReference type="ChEBI" id="CHEBI:74506"/>
        <dbReference type="ChEBI" id="CHEBI:82748"/>
        <dbReference type="EC" id="2.1.1.199"/>
    </reaction>
</comment>
<comment type="subcellular location">
    <subcellularLocation>
        <location evidence="1">Cytoplasm</location>
    </subcellularLocation>
</comment>
<comment type="similarity">
    <text evidence="1">Belongs to the methyltransferase superfamily. RsmH family.</text>
</comment>
<proteinExistence type="inferred from homology"/>
<reference key="1">
    <citation type="journal article" date="2010" name="BMC Genomics">
        <title>Complete genome sequence and lifestyle of black-pigmented Corynebacterium aurimucosum ATCC 700975 (formerly C. nigricans CN-1) isolated from a vaginal swab of a woman with spontaneous abortion.</title>
        <authorList>
            <person name="Trost E."/>
            <person name="Gotker S."/>
            <person name="Schneider J."/>
            <person name="Schneiker-Bekel S."/>
            <person name="Szczepanowski R."/>
            <person name="Tilker A."/>
            <person name="Viehoever P."/>
            <person name="Arnold W."/>
            <person name="Bekel T."/>
            <person name="Blom J."/>
            <person name="Gartemann K.H."/>
            <person name="Linke B."/>
            <person name="Goesmann A."/>
            <person name="Puhler A."/>
            <person name="Shukla S.K."/>
            <person name="Tauch A."/>
        </authorList>
    </citation>
    <scope>NUCLEOTIDE SEQUENCE [LARGE SCALE GENOMIC DNA]</scope>
    <source>
        <strain>ATCC 700975 / DSM 44827 / CIP 107346 / CN-1</strain>
    </source>
</reference>
<sequence>MEHDGTINYDVSENHGHVPVMRARMAQLLAPAIEAAGENAVIVDGTLGAGGHSEYFLTTFPSVRIIGVDRDSASLSSASRRLSPFADRFVGVNARFDEVGSAIAEGESEVFSIAREHGIAGALFDLGVSSMQLDQVDRGFAYKTDAPLDMRMDPRQGMTAADILNTYSHGDLARILKTYGDERFAGKIASAVLREREKEPFGNSARLVDLLYATIPAATRRTGGHPAKRTFQALRVEVNRELEAIEQVIPVITDALSIGGRAVFMSYQSLEDRIVKHAFTKLSTSTTPAGLPMDLPGTAAHYSVVTRGAEKASQEEIAENPRAASVRVRALERLEGTPSFHEPGGRP</sequence>
<name>RSMH_CORA7</name>